<protein>
    <recommendedName>
        <fullName evidence="1">Diaminopimelate epimerase</fullName>
        <shortName evidence="1">DAP epimerase</shortName>
        <ecNumber evidence="1">5.1.1.7</ecNumber>
    </recommendedName>
    <alternativeName>
        <fullName evidence="1">PLP-independent amino acid racemase</fullName>
    </alternativeName>
</protein>
<organism>
    <name type="scientific">Chlorobaculum tepidum (strain ATCC 49652 / DSM 12025 / NBRC 103806 / TLS)</name>
    <name type="common">Chlorobium tepidum</name>
    <dbReference type="NCBI Taxonomy" id="194439"/>
    <lineage>
        <taxon>Bacteria</taxon>
        <taxon>Pseudomonadati</taxon>
        <taxon>Chlorobiota</taxon>
        <taxon>Chlorobiia</taxon>
        <taxon>Chlorobiales</taxon>
        <taxon>Chlorobiaceae</taxon>
        <taxon>Chlorobaculum</taxon>
    </lineage>
</organism>
<sequence length="257" mass="28053">MSGAGNDFIVIDNRQGLFNLTHEQVRAMCTRRTGIGADGLILLETSETADFRMNYHNADGFPGTMCGNGGRCAVWFAHLIGIRPTGKHYRFEAGPSTYEAEVTGEESVRLHMLPPSDFRDGLQAGAWNCHFVDTGSPHAIAYVNNLDQLDVLTEGGNIRHNKELFPDGTNVNFLEITAPDALSIRTFERGVEDETLACGTGTVAAALMSFRLGKVTSSLVRVKVKSGETLMVGFNEMMDEIYLEGPARAVYRGTITL</sequence>
<feature type="chain" id="PRO_0000149832" description="Diaminopimelate epimerase">
    <location>
        <begin position="1"/>
        <end position="257"/>
    </location>
</feature>
<feature type="active site" description="Proton donor" evidence="1">
    <location>
        <position position="66"/>
    </location>
</feature>
<feature type="active site" description="Proton acceptor" evidence="1">
    <location>
        <position position="198"/>
    </location>
</feature>
<feature type="binding site" evidence="1">
    <location>
        <position position="6"/>
    </location>
    <ligand>
        <name>substrate</name>
    </ligand>
</feature>
<feature type="binding site" evidence="1">
    <location>
        <position position="57"/>
    </location>
    <ligand>
        <name>substrate</name>
    </ligand>
</feature>
<feature type="binding site" evidence="1">
    <location>
        <begin position="67"/>
        <end position="68"/>
    </location>
    <ligand>
        <name>substrate</name>
    </ligand>
</feature>
<feature type="binding site" evidence="1">
    <location>
        <position position="170"/>
    </location>
    <ligand>
        <name>substrate</name>
    </ligand>
</feature>
<feature type="binding site" evidence="1">
    <location>
        <begin position="188"/>
        <end position="189"/>
    </location>
    <ligand>
        <name>substrate</name>
    </ligand>
</feature>
<feature type="binding site" evidence="1">
    <location>
        <begin position="199"/>
        <end position="200"/>
    </location>
    <ligand>
        <name>substrate</name>
    </ligand>
</feature>
<feature type="site" description="Could be important to modulate the pK values of the two catalytic cysteine residues" evidence="1">
    <location>
        <position position="138"/>
    </location>
</feature>
<feature type="site" description="Could be important to modulate the pK values of the two catalytic cysteine residues" evidence="1">
    <location>
        <position position="188"/>
    </location>
</feature>
<dbReference type="EC" id="5.1.1.7" evidence="1"/>
<dbReference type="EMBL" id="AE006470">
    <property type="protein sequence ID" value="AAM73238.1"/>
    <property type="molecule type" value="Genomic_DNA"/>
</dbReference>
<dbReference type="RefSeq" id="NP_662896.1">
    <property type="nucleotide sequence ID" value="NC_002932.3"/>
</dbReference>
<dbReference type="SMR" id="Q8KAX9"/>
<dbReference type="STRING" id="194439.CT2021"/>
<dbReference type="EnsemblBacteria" id="AAM73238">
    <property type="protein sequence ID" value="AAM73238"/>
    <property type="gene ID" value="CT2021"/>
</dbReference>
<dbReference type="KEGG" id="cte:CT2021"/>
<dbReference type="PATRIC" id="fig|194439.7.peg.1831"/>
<dbReference type="eggNOG" id="COG0253">
    <property type="taxonomic scope" value="Bacteria"/>
</dbReference>
<dbReference type="HOGENOM" id="CLU_053306_3_2_10"/>
<dbReference type="OrthoDB" id="9805408at2"/>
<dbReference type="UniPathway" id="UPA00034">
    <property type="reaction ID" value="UER00025"/>
</dbReference>
<dbReference type="Proteomes" id="UP000001007">
    <property type="component" value="Chromosome"/>
</dbReference>
<dbReference type="GO" id="GO:0005829">
    <property type="term" value="C:cytosol"/>
    <property type="evidence" value="ECO:0007669"/>
    <property type="project" value="TreeGrafter"/>
</dbReference>
<dbReference type="GO" id="GO:0008837">
    <property type="term" value="F:diaminopimelate epimerase activity"/>
    <property type="evidence" value="ECO:0007669"/>
    <property type="project" value="UniProtKB-UniRule"/>
</dbReference>
<dbReference type="GO" id="GO:0009089">
    <property type="term" value="P:lysine biosynthetic process via diaminopimelate"/>
    <property type="evidence" value="ECO:0007669"/>
    <property type="project" value="UniProtKB-UniRule"/>
</dbReference>
<dbReference type="Gene3D" id="3.10.310.10">
    <property type="entry name" value="Diaminopimelate Epimerase, Chain A, domain 1"/>
    <property type="match status" value="2"/>
</dbReference>
<dbReference type="HAMAP" id="MF_00197">
    <property type="entry name" value="DAP_epimerase"/>
    <property type="match status" value="1"/>
</dbReference>
<dbReference type="InterPro" id="IPR018510">
    <property type="entry name" value="DAP_epimerase_AS"/>
</dbReference>
<dbReference type="InterPro" id="IPR001653">
    <property type="entry name" value="DAP_epimerase_DapF"/>
</dbReference>
<dbReference type="NCBIfam" id="TIGR00652">
    <property type="entry name" value="DapF"/>
    <property type="match status" value="1"/>
</dbReference>
<dbReference type="PANTHER" id="PTHR31689:SF0">
    <property type="entry name" value="DIAMINOPIMELATE EPIMERASE"/>
    <property type="match status" value="1"/>
</dbReference>
<dbReference type="PANTHER" id="PTHR31689">
    <property type="entry name" value="DIAMINOPIMELATE EPIMERASE, CHLOROPLASTIC"/>
    <property type="match status" value="1"/>
</dbReference>
<dbReference type="Pfam" id="PF01678">
    <property type="entry name" value="DAP_epimerase"/>
    <property type="match status" value="2"/>
</dbReference>
<dbReference type="SUPFAM" id="SSF54506">
    <property type="entry name" value="Diaminopimelate epimerase-like"/>
    <property type="match status" value="2"/>
</dbReference>
<dbReference type="PROSITE" id="PS01326">
    <property type="entry name" value="DAP_EPIMERASE"/>
    <property type="match status" value="1"/>
</dbReference>
<gene>
    <name evidence="1" type="primary">dapF</name>
    <name type="ordered locus">CT2021</name>
</gene>
<name>DAPF_CHLTE</name>
<proteinExistence type="inferred from homology"/>
<evidence type="ECO:0000255" key="1">
    <source>
        <dbReference type="HAMAP-Rule" id="MF_00197"/>
    </source>
</evidence>
<keyword id="KW-0028">Amino-acid biosynthesis</keyword>
<keyword id="KW-0963">Cytoplasm</keyword>
<keyword id="KW-0413">Isomerase</keyword>
<keyword id="KW-0457">Lysine biosynthesis</keyword>
<keyword id="KW-1185">Reference proteome</keyword>
<reference key="1">
    <citation type="journal article" date="2002" name="Proc. Natl. Acad. Sci. U.S.A.">
        <title>The complete genome sequence of Chlorobium tepidum TLS, a photosynthetic, anaerobic, green-sulfur bacterium.</title>
        <authorList>
            <person name="Eisen J.A."/>
            <person name="Nelson K.E."/>
            <person name="Paulsen I.T."/>
            <person name="Heidelberg J.F."/>
            <person name="Wu M."/>
            <person name="Dodson R.J."/>
            <person name="DeBoy R.T."/>
            <person name="Gwinn M.L."/>
            <person name="Nelson W.C."/>
            <person name="Haft D.H."/>
            <person name="Hickey E.K."/>
            <person name="Peterson J.D."/>
            <person name="Durkin A.S."/>
            <person name="Kolonay J.F."/>
            <person name="Yang F."/>
            <person name="Holt I.E."/>
            <person name="Umayam L.A."/>
            <person name="Mason T.M."/>
            <person name="Brenner M."/>
            <person name="Shea T.P."/>
            <person name="Parksey D.S."/>
            <person name="Nierman W.C."/>
            <person name="Feldblyum T.V."/>
            <person name="Hansen C.L."/>
            <person name="Craven M.B."/>
            <person name="Radune D."/>
            <person name="Vamathevan J.J."/>
            <person name="Khouri H.M."/>
            <person name="White O."/>
            <person name="Gruber T.M."/>
            <person name="Ketchum K.A."/>
            <person name="Venter J.C."/>
            <person name="Tettelin H."/>
            <person name="Bryant D.A."/>
            <person name="Fraser C.M."/>
        </authorList>
    </citation>
    <scope>NUCLEOTIDE SEQUENCE [LARGE SCALE GENOMIC DNA]</scope>
    <source>
        <strain>ATCC 49652 / DSM 12025 / NBRC 103806 / TLS</strain>
    </source>
</reference>
<accession>Q8KAX9</accession>
<comment type="function">
    <text evidence="1">Catalyzes the stereoinversion of LL-2,6-diaminopimelate (L,L-DAP) to meso-diaminopimelate (meso-DAP), a precursor of L-lysine and an essential component of the bacterial peptidoglycan.</text>
</comment>
<comment type="catalytic activity">
    <reaction evidence="1">
        <text>(2S,6S)-2,6-diaminopimelate = meso-2,6-diaminopimelate</text>
        <dbReference type="Rhea" id="RHEA:15393"/>
        <dbReference type="ChEBI" id="CHEBI:57609"/>
        <dbReference type="ChEBI" id="CHEBI:57791"/>
        <dbReference type="EC" id="5.1.1.7"/>
    </reaction>
</comment>
<comment type="pathway">
    <text evidence="1">Amino-acid biosynthesis; L-lysine biosynthesis via DAP pathway; DL-2,6-diaminopimelate from LL-2,6-diaminopimelate: step 1/1.</text>
</comment>
<comment type="subunit">
    <text evidence="1">Homodimer.</text>
</comment>
<comment type="subcellular location">
    <subcellularLocation>
        <location evidence="1">Cytoplasm</location>
    </subcellularLocation>
</comment>
<comment type="similarity">
    <text evidence="1">Belongs to the diaminopimelate epimerase family.</text>
</comment>